<name>TRN2_ARATH</name>
<feature type="chain" id="PRO_0000421041" description="Protein TORNADO 2">
    <location>
        <begin position="1"/>
        <end position="269"/>
    </location>
</feature>
<feature type="topological domain" description="Cytoplasmic" evidence="1">
    <location>
        <begin position="1"/>
        <end position="10"/>
    </location>
</feature>
<feature type="transmembrane region" description="Helical" evidence="1">
    <location>
        <begin position="11"/>
        <end position="31"/>
    </location>
</feature>
<feature type="topological domain" description="Extracellular" evidence="1">
    <location>
        <begin position="32"/>
        <end position="44"/>
    </location>
</feature>
<feature type="transmembrane region" description="Helical" evidence="1">
    <location>
        <begin position="45"/>
        <end position="65"/>
    </location>
</feature>
<feature type="topological domain" description="Cytoplasmic" evidence="1">
    <location>
        <begin position="66"/>
        <end position="71"/>
    </location>
</feature>
<feature type="transmembrane region" description="Helical" evidence="1">
    <location>
        <begin position="72"/>
        <end position="92"/>
    </location>
</feature>
<feature type="topological domain" description="Extracellular" evidence="1">
    <location>
        <begin position="93"/>
        <end position="231"/>
    </location>
</feature>
<feature type="transmembrane region" description="Helical" evidence="1">
    <location>
        <begin position="232"/>
        <end position="252"/>
    </location>
</feature>
<feature type="topological domain" description="Cytoplasmic" evidence="1">
    <location>
        <begin position="253"/>
        <end position="269"/>
    </location>
</feature>
<feature type="glycosylation site" description="N-linked (GlcNAc...) asparagine" evidence="1">
    <location>
        <position position="200"/>
    </location>
</feature>
<feature type="mutagenesis site" description="In trn2-3; twisted organs and impaired auxin flux." evidence="4">
    <original>P</original>
    <variation>L</variation>
    <location>
        <position position="164"/>
    </location>
</feature>
<feature type="mutagenesis site" description="In trn2-2; twisted organs and impaired auxin flux, with an enlarged peripheral zone in shoot apical meristem (SAM)." evidence="4 5">
    <original>G</original>
    <variation>E</variation>
    <location>
        <position position="177"/>
    </location>
</feature>
<feature type="sequence conflict" description="In Ref. 3; AAL49918." evidence="7" ref="3">
    <original>I</original>
    <variation>V</variation>
    <location>
        <position position="187"/>
    </location>
</feature>
<keyword id="KW-0927">Auxin signaling pathway</keyword>
<keyword id="KW-0217">Developmental protein</keyword>
<keyword id="KW-0325">Glycoprotein</keyword>
<keyword id="KW-0472">Membrane</keyword>
<keyword id="KW-1185">Reference proteome</keyword>
<keyword id="KW-0812">Transmembrane</keyword>
<keyword id="KW-1133">Transmembrane helix</keyword>
<gene>
    <name type="primary">TRN2</name>
    <name type="synonym">TET1</name>
    <name type="ordered locus">At5g46700</name>
    <name type="ORF">MZA15.11</name>
</gene>
<accession>Q9FIQ5</accession>
<accession>Q8VYM8</accession>
<organism>
    <name type="scientific">Arabidopsis thaliana</name>
    <name type="common">Mouse-ear cress</name>
    <dbReference type="NCBI Taxonomy" id="3702"/>
    <lineage>
        <taxon>Eukaryota</taxon>
        <taxon>Viridiplantae</taxon>
        <taxon>Streptophyta</taxon>
        <taxon>Embryophyta</taxon>
        <taxon>Tracheophyta</taxon>
        <taxon>Spermatophyta</taxon>
        <taxon>Magnoliopsida</taxon>
        <taxon>eudicotyledons</taxon>
        <taxon>Gunneridae</taxon>
        <taxon>Pentapetalae</taxon>
        <taxon>rosids</taxon>
        <taxon>malvids</taxon>
        <taxon>Brassicales</taxon>
        <taxon>Brassicaceae</taxon>
        <taxon>Camelineae</taxon>
        <taxon>Arabidopsis</taxon>
    </lineage>
</organism>
<proteinExistence type="evidence at protein level"/>
<dbReference type="EMBL" id="AB016882">
    <property type="protein sequence ID" value="BAB08914.1"/>
    <property type="molecule type" value="Genomic_DNA"/>
</dbReference>
<dbReference type="EMBL" id="CP002688">
    <property type="protein sequence ID" value="AED95415.1"/>
    <property type="molecule type" value="Genomic_DNA"/>
</dbReference>
<dbReference type="EMBL" id="AY070423">
    <property type="protein sequence ID" value="AAL49918.1"/>
    <property type="molecule type" value="mRNA"/>
</dbReference>
<dbReference type="EMBL" id="BT020321">
    <property type="protein sequence ID" value="AAV85676.1"/>
    <property type="molecule type" value="mRNA"/>
</dbReference>
<dbReference type="EMBL" id="AK226278">
    <property type="protein sequence ID" value="BAE98437.1"/>
    <property type="molecule type" value="mRNA"/>
</dbReference>
<dbReference type="RefSeq" id="NP_199482.1">
    <property type="nucleotide sequence ID" value="NM_124040.5"/>
</dbReference>
<dbReference type="FunCoup" id="Q9FIQ5">
    <property type="interactions" value="689"/>
</dbReference>
<dbReference type="STRING" id="3702.Q9FIQ5"/>
<dbReference type="GlyCosmos" id="Q9FIQ5">
    <property type="glycosylation" value="1 site, No reported glycans"/>
</dbReference>
<dbReference type="GlyGen" id="Q9FIQ5">
    <property type="glycosylation" value="1 site"/>
</dbReference>
<dbReference type="PaxDb" id="3702-AT5G46700.1"/>
<dbReference type="ProteomicsDB" id="234589"/>
<dbReference type="EnsemblPlants" id="AT5G46700.1">
    <property type="protein sequence ID" value="AT5G46700.1"/>
    <property type="gene ID" value="AT5G46700"/>
</dbReference>
<dbReference type="GeneID" id="834713"/>
<dbReference type="Gramene" id="AT5G46700.1">
    <property type="protein sequence ID" value="AT5G46700.1"/>
    <property type="gene ID" value="AT5G46700"/>
</dbReference>
<dbReference type="KEGG" id="ath:AT5G46700"/>
<dbReference type="Araport" id="AT5G46700"/>
<dbReference type="TAIR" id="AT5G46700">
    <property type="gene designation" value="TRN2"/>
</dbReference>
<dbReference type="eggNOG" id="ENOG502QQRT">
    <property type="taxonomic scope" value="Eukaryota"/>
</dbReference>
<dbReference type="HOGENOM" id="CLU_066970_0_0_1"/>
<dbReference type="InParanoid" id="Q9FIQ5"/>
<dbReference type="OMA" id="ADMDCLN"/>
<dbReference type="OrthoDB" id="664300at2759"/>
<dbReference type="PRO" id="PR:Q9FIQ5"/>
<dbReference type="Proteomes" id="UP000006548">
    <property type="component" value="Chromosome 5"/>
</dbReference>
<dbReference type="ExpressionAtlas" id="Q9FIQ5">
    <property type="expression patterns" value="baseline and differential"/>
</dbReference>
<dbReference type="GO" id="GO:0016020">
    <property type="term" value="C:membrane"/>
    <property type="evidence" value="ECO:0007669"/>
    <property type="project" value="UniProtKB-SubCell"/>
</dbReference>
<dbReference type="GO" id="GO:0009506">
    <property type="term" value="C:plasmodesma"/>
    <property type="evidence" value="ECO:0007005"/>
    <property type="project" value="TAIR"/>
</dbReference>
<dbReference type="GO" id="GO:0009734">
    <property type="term" value="P:auxin-activated signaling pathway"/>
    <property type="evidence" value="ECO:0007669"/>
    <property type="project" value="UniProtKB-KW"/>
</dbReference>
<dbReference type="GO" id="GO:0010305">
    <property type="term" value="P:leaf vascular tissue pattern formation"/>
    <property type="evidence" value="ECO:0000315"/>
    <property type="project" value="TAIR"/>
</dbReference>
<dbReference type="GO" id="GO:0009554">
    <property type="term" value="P:megasporogenesis"/>
    <property type="evidence" value="ECO:0000315"/>
    <property type="project" value="UniProtKB"/>
</dbReference>
<dbReference type="GO" id="GO:0009933">
    <property type="term" value="P:meristem structural organization"/>
    <property type="evidence" value="ECO:0000315"/>
    <property type="project" value="TAIR"/>
</dbReference>
<dbReference type="GO" id="GO:0009956">
    <property type="term" value="P:radial pattern formation"/>
    <property type="evidence" value="ECO:0000315"/>
    <property type="project" value="TAIR"/>
</dbReference>
<dbReference type="GO" id="GO:0009934">
    <property type="term" value="P:regulation of meristem structural organization"/>
    <property type="evidence" value="ECO:0000315"/>
    <property type="project" value="UniProtKB"/>
</dbReference>
<dbReference type="GO" id="GO:0010015">
    <property type="term" value="P:root morphogenesis"/>
    <property type="evidence" value="ECO:0000315"/>
    <property type="project" value="TAIR"/>
</dbReference>
<dbReference type="InterPro" id="IPR044991">
    <property type="entry name" value="TET_plant"/>
</dbReference>
<dbReference type="InterPro" id="IPR018499">
    <property type="entry name" value="Tetraspanin/Peripherin"/>
</dbReference>
<dbReference type="PANTHER" id="PTHR32191">
    <property type="entry name" value="TETRASPANIN-8-RELATED"/>
    <property type="match status" value="1"/>
</dbReference>
<dbReference type="Pfam" id="PF00335">
    <property type="entry name" value="Tetraspanin"/>
    <property type="match status" value="1"/>
</dbReference>
<sequence>MPLSNNVIGCINFITVLLSIPVIGAGIWLAIGTVNSCVKLLQWPVIILGVLILLVGLAGFIGGFWRITWLLVVYLIAMLILIVLLGCLVGFIYMVTIRGSGHPEPSRAYLEYSLQDFSGWLRRRVQRSYKWERIRTCLSTTTICPELNQRYTLAQDFFNAHLDPIQSGCCKPPTKCGFTFVNPTYWISPIDMSADMDCLNWSNDQNTLCYTCDSCKAGLLANIKVDWLKADIFLLLALIGLIIVYIIGCCAFRNAETEDIFRKYKQGYT</sequence>
<comment type="function">
    <text evidence="2 3 4 5 6">Involved in the basipetal transport of auxin (IAA) that modulates growth and organs organization, as well as cell differentiation. Regulates shoot apical meristem (SAM) organization in the peripheral zone. Required for initial meristematic divisions in the epidermal/lateral root cap leading to the formation of epidermal cells and a clone of lateral root cap cells, as well as for the maintenance of the radial pattern of cell specification in the root, thus regulating the distinction between the lateral root cap and epidermis. Together with WIH peptides, promotes megasporogenesis.</text>
</comment>
<comment type="subcellular location">
    <subcellularLocation>
        <location evidence="7">Membrane</location>
        <topology evidence="7">Multi-pass membrane protein</topology>
    </subcellularLocation>
</comment>
<comment type="tissue specificity">
    <text evidence="3 4 6">Expressed in seedlings, roots, leaves, stems, apex, siliques and flowers. Present in ovules, prominently in nucellus and integuments.</text>
</comment>
<comment type="developmental stage">
    <text evidence="4 5">Strongly expressed in all types of meristems, including the shoot apical meristem (SAM) and lateral organ primordia. Also detected in the lamina of the cotyledons, especially in the mesophyll and vascular bundles. In leaf primorida preferentially present in vascular strands and at the distal tip of the leaflet. In the floral meristem, first detected in flanking sepal primordia, and later expressed in stamens and carpels in flowers.</text>
</comment>
<comment type="disruption phenotype">
    <text evidence="2 3 4 6">Severe dwarfism combined with twisted and malformed organs, and sterility. Loss of initial meristematic divisions in the epidermal/lateral root cap. Defection in basipetal transport of auxin (IAA) leading to several development aberrations.</text>
</comment>
<comment type="miscellaneous">
    <text evidence="8">'Ekeko' is derived from Inca language (quechua) for small and hunchbacked fortune god.</text>
</comment>
<comment type="similarity">
    <text evidence="7">Belongs to the tetraspanin (TM4SF) family.</text>
</comment>
<evidence type="ECO:0000255" key="1"/>
<evidence type="ECO:0000269" key="2">
    <source>
    </source>
</evidence>
<evidence type="ECO:0000269" key="3">
    <source>
    </source>
</evidence>
<evidence type="ECO:0000269" key="4">
    <source>
    </source>
</evidence>
<evidence type="ECO:0000269" key="5">
    <source>
    </source>
</evidence>
<evidence type="ECO:0000269" key="6">
    <source>
    </source>
</evidence>
<evidence type="ECO:0000305" key="7"/>
<evidence type="ECO:0000305" key="8">
    <source>
    </source>
</evidence>
<protein>
    <recommendedName>
        <fullName>Protein TORNADO 2</fullName>
    </recommendedName>
    <alternativeName>
        <fullName>Protein EKEKO</fullName>
    </alternativeName>
    <alternativeName>
        <fullName>TETRASPANIN-1</fullName>
    </alternativeName>
</protein>
<reference key="1">
    <citation type="journal article" date="1998" name="DNA Res.">
        <title>Structural analysis of Arabidopsis thaliana chromosome 5. VIII. Sequence features of the regions of 1,081,958 bp covered by seventeen physically assigned P1 and TAC clones.</title>
        <authorList>
            <person name="Asamizu E."/>
            <person name="Sato S."/>
            <person name="Kaneko T."/>
            <person name="Nakamura Y."/>
            <person name="Kotani H."/>
            <person name="Miyajima N."/>
            <person name="Tabata S."/>
        </authorList>
    </citation>
    <scope>NUCLEOTIDE SEQUENCE [LARGE SCALE GENOMIC DNA]</scope>
    <source>
        <strain>cv. Columbia</strain>
    </source>
</reference>
<reference key="2">
    <citation type="journal article" date="2017" name="Plant J.">
        <title>Araport11: a complete reannotation of the Arabidopsis thaliana reference genome.</title>
        <authorList>
            <person name="Cheng C.Y."/>
            <person name="Krishnakumar V."/>
            <person name="Chan A.P."/>
            <person name="Thibaud-Nissen F."/>
            <person name="Schobel S."/>
            <person name="Town C.D."/>
        </authorList>
    </citation>
    <scope>GENOME REANNOTATION</scope>
    <source>
        <strain>cv. Columbia</strain>
    </source>
</reference>
<reference key="3">
    <citation type="journal article" date="2003" name="Science">
        <title>Empirical analysis of transcriptional activity in the Arabidopsis genome.</title>
        <authorList>
            <person name="Yamada K."/>
            <person name="Lim J."/>
            <person name="Dale J.M."/>
            <person name="Chen H."/>
            <person name="Shinn P."/>
            <person name="Palm C.J."/>
            <person name="Southwick A.M."/>
            <person name="Wu H.C."/>
            <person name="Kim C.J."/>
            <person name="Nguyen M."/>
            <person name="Pham P.K."/>
            <person name="Cheuk R.F."/>
            <person name="Karlin-Newmann G."/>
            <person name="Liu S.X."/>
            <person name="Lam B."/>
            <person name="Sakano H."/>
            <person name="Wu T."/>
            <person name="Yu G."/>
            <person name="Miranda M."/>
            <person name="Quach H.L."/>
            <person name="Tripp M."/>
            <person name="Chang C.H."/>
            <person name="Lee J.M."/>
            <person name="Toriumi M.J."/>
            <person name="Chan M.M."/>
            <person name="Tang C.C."/>
            <person name="Onodera C.S."/>
            <person name="Deng J.M."/>
            <person name="Akiyama K."/>
            <person name="Ansari Y."/>
            <person name="Arakawa T."/>
            <person name="Banh J."/>
            <person name="Banno F."/>
            <person name="Bowser L."/>
            <person name="Brooks S.Y."/>
            <person name="Carninci P."/>
            <person name="Chao Q."/>
            <person name="Choy N."/>
            <person name="Enju A."/>
            <person name="Goldsmith A.D."/>
            <person name="Gurjal M."/>
            <person name="Hansen N.F."/>
            <person name="Hayashizaki Y."/>
            <person name="Johnson-Hopson C."/>
            <person name="Hsuan V.W."/>
            <person name="Iida K."/>
            <person name="Karnes M."/>
            <person name="Khan S."/>
            <person name="Koesema E."/>
            <person name="Ishida J."/>
            <person name="Jiang P.X."/>
            <person name="Jones T."/>
            <person name="Kawai J."/>
            <person name="Kamiya A."/>
            <person name="Meyers C."/>
            <person name="Nakajima M."/>
            <person name="Narusaka M."/>
            <person name="Seki M."/>
            <person name="Sakurai T."/>
            <person name="Satou M."/>
            <person name="Tamse R."/>
            <person name="Vaysberg M."/>
            <person name="Wallender E.K."/>
            <person name="Wong C."/>
            <person name="Yamamura Y."/>
            <person name="Yuan S."/>
            <person name="Shinozaki K."/>
            <person name="Davis R.W."/>
            <person name="Theologis A."/>
            <person name="Ecker J.R."/>
        </authorList>
    </citation>
    <scope>NUCLEOTIDE SEQUENCE [LARGE SCALE MRNA]</scope>
    <source>
        <strain>cv. Columbia</strain>
    </source>
</reference>
<reference key="4">
    <citation type="submission" date="2004-12" db="EMBL/GenBank/DDBJ databases">
        <title>Arabidopsis ORF clones.</title>
        <authorList>
            <person name="Kim C.J."/>
            <person name="Chen H."/>
            <person name="Cheuk R.F."/>
            <person name="Shinn P."/>
            <person name="Ecker J.R."/>
        </authorList>
    </citation>
    <scope>NUCLEOTIDE SEQUENCE [LARGE SCALE MRNA]</scope>
    <source>
        <strain>cv. Columbia</strain>
    </source>
</reference>
<reference key="5">
    <citation type="submission" date="2006-07" db="EMBL/GenBank/DDBJ databases">
        <title>Large-scale analysis of RIKEN Arabidopsis full-length (RAFL) cDNAs.</title>
        <authorList>
            <person name="Totoki Y."/>
            <person name="Seki M."/>
            <person name="Ishida J."/>
            <person name="Nakajima M."/>
            <person name="Enju A."/>
            <person name="Kamiya A."/>
            <person name="Narusaka M."/>
            <person name="Shin-i T."/>
            <person name="Nakagawa M."/>
            <person name="Sakamoto N."/>
            <person name="Oishi K."/>
            <person name="Kohara Y."/>
            <person name="Kobayashi M."/>
            <person name="Toyoda A."/>
            <person name="Sakaki Y."/>
            <person name="Sakurai T."/>
            <person name="Iida K."/>
            <person name="Akiyama K."/>
            <person name="Satou M."/>
            <person name="Toyoda T."/>
            <person name="Konagaya A."/>
            <person name="Carninci P."/>
            <person name="Kawai J."/>
            <person name="Hayashizaki Y."/>
            <person name="Shinozaki K."/>
        </authorList>
    </citation>
    <scope>NUCLEOTIDE SEQUENCE [LARGE SCALE MRNA]</scope>
    <source>
        <strain>cv. Columbia</strain>
    </source>
</reference>
<reference key="6">
    <citation type="journal article" date="2000" name="Development">
        <title>Tornado1 and tornado2 are required for the specification of radial and circumferential pattern in the Arabidopsis root.</title>
        <authorList>
            <person name="Cnops G."/>
            <person name="Wang X."/>
            <person name="Linstead P."/>
            <person name="Van Montagu M."/>
            <person name="Van Lijsebettens M."/>
            <person name="Dolan L."/>
        </authorList>
    </citation>
    <scope>FUNCTION</scope>
    <scope>DISRUPTION PHENOTYPE</scope>
    <source>
        <strain>cv. Columbia</strain>
    </source>
</reference>
<reference key="7">
    <citation type="journal article" date="2003" name="Biochem. Biophys. Res. Commun.">
        <title>The ekeko mutant demonstrates a role for tetraspanin-like protein in plant development.</title>
        <authorList>
            <person name="Olmos E."/>
            <person name="Reiss B."/>
            <person name="Dekker K."/>
        </authorList>
    </citation>
    <scope>FUNCTION</scope>
    <scope>DISRUPTION PHENOTYPE</scope>
    <scope>TISSUE SPECIFICITY</scope>
    <source>
        <strain>cv. Columbia</strain>
    </source>
</reference>
<reference key="8">
    <citation type="journal article" date="2006" name="Plant Cell">
        <title>The TORNADO1 and TORNADO2 genes function in several patterning processes during early leaf development in Arabidopsis thaliana.</title>
        <authorList>
            <person name="Cnops G."/>
            <person name="Neyt P."/>
            <person name="Raes J."/>
            <person name="Petrarulo M."/>
            <person name="Nelissen H."/>
            <person name="Malenica N."/>
            <person name="Luschnig C."/>
            <person name="Tietz O."/>
            <person name="Ditengou F."/>
            <person name="Palme K."/>
            <person name="Azmi A."/>
            <person name="Prinsen E."/>
            <person name="Van Lijsebettens M."/>
        </authorList>
    </citation>
    <scope>FUNCTION</scope>
    <scope>DISRUPTION PHENOTYPE</scope>
    <scope>MUTAGENESIS OF PRO-164 AND GLY-177</scope>
    <scope>TISSUE SPECIFICITY</scope>
    <scope>DEVELOPMENTAL STAGE</scope>
</reference>
<reference key="9">
    <citation type="journal article" date="2007" name="Plant Mol. Biol.">
        <title>Mutations in the TORNADO2 gene affect cellular decisions in the peripheral zone of the shoot apical meristem of Arabidopsis thaliana.</title>
        <authorList>
            <person name="Chiu W.-H."/>
            <person name="Chandler J."/>
            <person name="Cnops G."/>
            <person name="Van Lijsebettens M."/>
            <person name="Werr W."/>
        </authorList>
    </citation>
    <scope>FUNCTION</scope>
    <scope>MUTAGENESIS OF GLY-177</scope>
    <scope>DEVELOPMENTAL STAGE</scope>
</reference>
<reference key="10">
    <citation type="journal article" date="2011" name="Curr. Biol.">
        <title>Arabidopsis WIH1 and WIH2 genes act in the transition from somatic to reproductive cell fate.</title>
        <authorList>
            <person name="Lieber D."/>
            <person name="Lora J."/>
            <person name="Schrempp S."/>
            <person name="Lenhard M."/>
            <person name="Laux T."/>
        </authorList>
    </citation>
    <scope>FUNCTION</scope>
    <scope>DISRUPTION PHENOTYPE</scope>
    <scope>TISSUE SPECIFICITY</scope>
</reference>